<dbReference type="EMBL" id="AJ585600">
    <property type="protein sequence ID" value="CAE52120.1"/>
    <property type="molecule type" value="Genomic_DNA"/>
</dbReference>
<dbReference type="EMBL" id="AJ585601">
    <property type="protein sequence ID" value="CAE52121.1"/>
    <property type="molecule type" value="Genomic_DNA"/>
</dbReference>
<dbReference type="EMBL" id="AJ585602">
    <property type="protein sequence ID" value="CAE52122.1"/>
    <property type="molecule type" value="Genomic_DNA"/>
</dbReference>
<dbReference type="EMBL" id="AJ585603">
    <property type="protein sequence ID" value="CAE52123.1"/>
    <property type="molecule type" value="Genomic_DNA"/>
</dbReference>
<dbReference type="EMBL" id="AJ585604">
    <property type="protein sequence ID" value="CAE52124.1"/>
    <property type="molecule type" value="Genomic_DNA"/>
</dbReference>
<dbReference type="EMBL" id="AJ585605">
    <property type="protein sequence ID" value="CAE52125.1"/>
    <property type="molecule type" value="Genomic_DNA"/>
</dbReference>
<dbReference type="EMBL" id="AJ585606">
    <property type="protein sequence ID" value="CAE52126.1"/>
    <property type="molecule type" value="Genomic_DNA"/>
</dbReference>
<dbReference type="EMBL" id="AJ585607">
    <property type="protein sequence ID" value="CAE52127.1"/>
    <property type="molecule type" value="Genomic_DNA"/>
</dbReference>
<dbReference type="EMBL" id="AJ585608">
    <property type="protein sequence ID" value="CAE52128.1"/>
    <property type="molecule type" value="Genomic_DNA"/>
</dbReference>
<dbReference type="EMBL" id="AJ585609">
    <property type="protein sequence ID" value="CAE52129.1"/>
    <property type="molecule type" value="Genomic_DNA"/>
</dbReference>
<dbReference type="EMBL" id="AJ585610">
    <property type="protein sequence ID" value="CAE52130.1"/>
    <property type="molecule type" value="Genomic_DNA"/>
</dbReference>
<dbReference type="EMBL" id="AJ585611">
    <property type="protein sequence ID" value="CAE52131.1"/>
    <property type="molecule type" value="Genomic_DNA"/>
</dbReference>
<dbReference type="EMBL" id="AJ585612">
    <property type="protein sequence ID" value="CAE52132.1"/>
    <property type="molecule type" value="Genomic_DNA"/>
</dbReference>
<dbReference type="EMBL" id="AJ585613">
    <property type="protein sequence ID" value="CAE52133.1"/>
    <property type="molecule type" value="Genomic_DNA"/>
</dbReference>
<dbReference type="EMBL" id="AJ585614">
    <property type="protein sequence ID" value="CAE52134.1"/>
    <property type="molecule type" value="Genomic_DNA"/>
</dbReference>
<dbReference type="EMBL" id="AJ585615">
    <property type="protein sequence ID" value="CAE52135.1"/>
    <property type="molecule type" value="Genomic_DNA"/>
</dbReference>
<dbReference type="EMBL" id="AJ585616">
    <property type="protein sequence ID" value="CAE52136.1"/>
    <property type="molecule type" value="Genomic_DNA"/>
</dbReference>
<dbReference type="EMBL" id="AJ585617">
    <property type="protein sequence ID" value="CAE52137.1"/>
    <property type="molecule type" value="Genomic_DNA"/>
</dbReference>
<dbReference type="EMBL" id="AJ585618">
    <property type="protein sequence ID" value="CAE52138.1"/>
    <property type="molecule type" value="Genomic_DNA"/>
</dbReference>
<dbReference type="EMBL" id="AJ585619">
    <property type="protein sequence ID" value="CAE52139.1"/>
    <property type="molecule type" value="Genomic_DNA"/>
</dbReference>
<dbReference type="EMBL" id="Z35909">
    <property type="protein sequence ID" value="CAA84982.1"/>
    <property type="molecule type" value="Genomic_DNA"/>
</dbReference>
<dbReference type="EMBL" id="AY557864">
    <property type="protein sequence ID" value="AAS56190.1"/>
    <property type="molecule type" value="Genomic_DNA"/>
</dbReference>
<dbReference type="EMBL" id="BK006936">
    <property type="protein sequence ID" value="DAA07160.1"/>
    <property type="molecule type" value="Genomic_DNA"/>
</dbReference>
<dbReference type="PIR" id="S45898">
    <property type="entry name" value="S45898"/>
</dbReference>
<dbReference type="RefSeq" id="NP_009596.1">
    <property type="nucleotide sequence ID" value="NM_001178388.1"/>
</dbReference>
<dbReference type="BioGRID" id="32741">
    <property type="interactions" value="146"/>
</dbReference>
<dbReference type="DIP" id="DIP-1347N"/>
<dbReference type="FunCoup" id="P38224">
    <property type="interactions" value="49"/>
</dbReference>
<dbReference type="IntAct" id="P38224">
    <property type="interactions" value="1"/>
</dbReference>
<dbReference type="MINT" id="P38224"/>
<dbReference type="STRING" id="4932.YBR040W"/>
<dbReference type="TCDB" id="1.A.81.1.1">
    <property type="family name" value="the low affinity ca(2+) channel (lacc) family"/>
</dbReference>
<dbReference type="iPTMnet" id="P38224"/>
<dbReference type="PaxDb" id="4932-YBR040W"/>
<dbReference type="PeptideAtlas" id="P38224"/>
<dbReference type="EnsemblFungi" id="YBR040W_mRNA">
    <property type="protein sequence ID" value="YBR040W"/>
    <property type="gene ID" value="YBR040W"/>
</dbReference>
<dbReference type="GeneID" id="852328"/>
<dbReference type="KEGG" id="sce:YBR040W"/>
<dbReference type="AGR" id="SGD:S000000244"/>
<dbReference type="SGD" id="S000000244">
    <property type="gene designation" value="FIG1"/>
</dbReference>
<dbReference type="VEuPathDB" id="FungiDB:YBR040W"/>
<dbReference type="eggNOG" id="ENOG502QUDU">
    <property type="taxonomic scope" value="Eukaryota"/>
</dbReference>
<dbReference type="HOGENOM" id="CLU_075335_0_0_1"/>
<dbReference type="InParanoid" id="P38224"/>
<dbReference type="OMA" id="YFGICVN"/>
<dbReference type="OrthoDB" id="4089394at2759"/>
<dbReference type="BioCyc" id="YEAST:G3O-29014-MONOMER"/>
<dbReference type="BioGRID-ORCS" id="852328">
    <property type="hits" value="0 hits in 10 CRISPR screens"/>
</dbReference>
<dbReference type="PRO" id="PR:P38224"/>
<dbReference type="Proteomes" id="UP000002311">
    <property type="component" value="Chromosome II"/>
</dbReference>
<dbReference type="RNAct" id="P38224">
    <property type="molecule type" value="protein"/>
</dbReference>
<dbReference type="GO" id="GO:0009277">
    <property type="term" value="C:fungal-type cell wall"/>
    <property type="evidence" value="ECO:0000314"/>
    <property type="project" value="SGD"/>
</dbReference>
<dbReference type="GO" id="GO:0000324">
    <property type="term" value="C:fungal-type vacuole"/>
    <property type="evidence" value="ECO:0007005"/>
    <property type="project" value="SGD"/>
</dbReference>
<dbReference type="GO" id="GO:0043332">
    <property type="term" value="C:mating projection tip"/>
    <property type="evidence" value="ECO:0000314"/>
    <property type="project" value="SGD"/>
</dbReference>
<dbReference type="GO" id="GO:0016020">
    <property type="term" value="C:membrane"/>
    <property type="evidence" value="ECO:0007669"/>
    <property type="project" value="UniProtKB-SubCell"/>
</dbReference>
<dbReference type="GO" id="GO:0000753">
    <property type="term" value="P:cell morphogenesis involved in conjugation with cellular fusion"/>
    <property type="evidence" value="ECO:0000315"/>
    <property type="project" value="SGD"/>
</dbReference>
<dbReference type="GO" id="GO:0000747">
    <property type="term" value="P:conjugation with cellular fusion"/>
    <property type="evidence" value="ECO:0000318"/>
    <property type="project" value="GO_Central"/>
</dbReference>
<dbReference type="GO" id="GO:0000755">
    <property type="term" value="P:cytogamy"/>
    <property type="evidence" value="ECO:0000315"/>
    <property type="project" value="SGD"/>
</dbReference>
<dbReference type="InterPro" id="IPR033481">
    <property type="entry name" value="Dni1/Fig1"/>
</dbReference>
<dbReference type="InterPro" id="IPR016509">
    <property type="entry name" value="Fig1"/>
</dbReference>
<dbReference type="PANTHER" id="PTHR28092">
    <property type="entry name" value="FACTOR-INDUCED GENE 1 PROTEIN"/>
    <property type="match status" value="1"/>
</dbReference>
<dbReference type="PANTHER" id="PTHR28092:SF1">
    <property type="entry name" value="FACTOR-INDUCED GENE 1 PROTEIN"/>
    <property type="match status" value="1"/>
</dbReference>
<dbReference type="Pfam" id="PF12351">
    <property type="entry name" value="Fig1"/>
    <property type="match status" value="1"/>
</dbReference>
<dbReference type="PIRSF" id="PIRSF007138">
    <property type="entry name" value="FIG1"/>
    <property type="match status" value="1"/>
</dbReference>
<keyword id="KW-0472">Membrane</keyword>
<keyword id="KW-0597">Phosphoprotein</keyword>
<keyword id="KW-1185">Reference proteome</keyword>
<keyword id="KW-0812">Transmembrane</keyword>
<keyword id="KW-1133">Transmembrane helix</keyword>
<accession>P38224</accession>
<accession>D6VQ40</accession>
<accession>Q70DD9</accession>
<accession>Q70DE0</accession>
<accession>Q70DE1</accession>
<accession>Q70DE3</accession>
<accession>Q70DE4</accession>
<accession>Q70DE5</accession>
<accession>Q70DE6</accession>
<reference key="1">
    <citation type="journal article" date="2004" name="Nucleic Acids Res.">
        <title>Differential evolution of the Saccharomyces cerevisiae DUP240 paralogs and implication of recombination in phylogeny.</title>
        <authorList>
            <person name="Leh-Louis V."/>
            <person name="Wirth B."/>
            <person name="Despons L."/>
            <person name="Wain-Hobson S."/>
            <person name="Potier S."/>
            <person name="Souciet J.-L."/>
        </authorList>
    </citation>
    <scope>NUCLEOTIDE SEQUENCE [GENOMIC DNA]</scope>
    <scope>VARIANTS 1-MET--SER-5 DEL; VAL-153; LEU-203; ILE-204; GLU-220; ILE-223; ASN-236 AND THR-241</scope>
    <source>
        <strain>CLIB 219</strain>
        <strain>CLIB 382</strain>
        <strain>CLIB 388</strain>
        <strain>CLIB 410</strain>
        <strain>CLIB 413</strain>
        <strain>CLIB 556</strain>
        <strain>CLIB 630</strain>
        <strain>CLIB 95</strain>
        <strain>K1</strain>
        <strain>R12</strain>
        <strain>R13</strain>
        <strain>Sigma 1278B</strain>
        <strain>YIIc12</strain>
        <strain>YIIc17</strain>
    </source>
</reference>
<reference key="2">
    <citation type="journal article" date="1994" name="EMBO J.">
        <title>Complete DNA sequence of yeast chromosome II.</title>
        <authorList>
            <person name="Feldmann H."/>
            <person name="Aigle M."/>
            <person name="Aljinovic G."/>
            <person name="Andre B."/>
            <person name="Baclet M.C."/>
            <person name="Barthe C."/>
            <person name="Baur A."/>
            <person name="Becam A.-M."/>
            <person name="Biteau N."/>
            <person name="Boles E."/>
            <person name="Brandt T."/>
            <person name="Brendel M."/>
            <person name="Brueckner M."/>
            <person name="Bussereau F."/>
            <person name="Christiansen C."/>
            <person name="Contreras R."/>
            <person name="Crouzet M."/>
            <person name="Cziepluch C."/>
            <person name="Demolis N."/>
            <person name="Delaveau T."/>
            <person name="Doignon F."/>
            <person name="Domdey H."/>
            <person name="Duesterhus S."/>
            <person name="Dubois E."/>
            <person name="Dujon B."/>
            <person name="El Bakkoury M."/>
            <person name="Entian K.-D."/>
            <person name="Feuermann M."/>
            <person name="Fiers W."/>
            <person name="Fobo G.M."/>
            <person name="Fritz C."/>
            <person name="Gassenhuber J."/>
            <person name="Glansdorff N."/>
            <person name="Goffeau A."/>
            <person name="Grivell L.A."/>
            <person name="de Haan M."/>
            <person name="Hein C."/>
            <person name="Herbert C.J."/>
            <person name="Hollenberg C.P."/>
            <person name="Holmstroem K."/>
            <person name="Jacq C."/>
            <person name="Jacquet M."/>
            <person name="Jauniaux J.-C."/>
            <person name="Jonniaux J.-L."/>
            <person name="Kallesoee T."/>
            <person name="Kiesau P."/>
            <person name="Kirchrath L."/>
            <person name="Koetter P."/>
            <person name="Korol S."/>
            <person name="Liebl S."/>
            <person name="Logghe M."/>
            <person name="Lohan A.J.E."/>
            <person name="Louis E.J."/>
            <person name="Li Z.Y."/>
            <person name="Maat M.J."/>
            <person name="Mallet L."/>
            <person name="Mannhaupt G."/>
            <person name="Messenguy F."/>
            <person name="Miosga T."/>
            <person name="Molemans F."/>
            <person name="Mueller S."/>
            <person name="Nasr F."/>
            <person name="Obermaier B."/>
            <person name="Perea J."/>
            <person name="Pierard A."/>
            <person name="Piravandi E."/>
            <person name="Pohl F.M."/>
            <person name="Pohl T.M."/>
            <person name="Potier S."/>
            <person name="Proft M."/>
            <person name="Purnelle B."/>
            <person name="Ramezani Rad M."/>
            <person name="Rieger M."/>
            <person name="Rose M."/>
            <person name="Schaaff-Gerstenschlaeger I."/>
            <person name="Scherens B."/>
            <person name="Schwarzlose C."/>
            <person name="Skala J."/>
            <person name="Slonimski P.P."/>
            <person name="Smits P.H.M."/>
            <person name="Souciet J.-L."/>
            <person name="Steensma H.Y."/>
            <person name="Stucka R."/>
            <person name="Urrestarazu L.A."/>
            <person name="van der Aart Q.J.M."/>
            <person name="Van Dyck L."/>
            <person name="Vassarotti A."/>
            <person name="Vetter I."/>
            <person name="Vierendeels F."/>
            <person name="Vissers S."/>
            <person name="Wagner G."/>
            <person name="de Wergifosse P."/>
            <person name="Wolfe K.H."/>
            <person name="Zagulski M."/>
            <person name="Zimmermann F.K."/>
            <person name="Mewes H.-W."/>
            <person name="Kleine K."/>
        </authorList>
    </citation>
    <scope>NUCLEOTIDE SEQUENCE [LARGE SCALE GENOMIC DNA]</scope>
    <source>
        <strain>ATCC 204508 / S288c</strain>
    </source>
</reference>
<reference key="3">
    <citation type="journal article" date="2014" name="G3 (Bethesda)">
        <title>The reference genome sequence of Saccharomyces cerevisiae: Then and now.</title>
        <authorList>
            <person name="Engel S.R."/>
            <person name="Dietrich F.S."/>
            <person name="Fisk D.G."/>
            <person name="Binkley G."/>
            <person name="Balakrishnan R."/>
            <person name="Costanzo M.C."/>
            <person name="Dwight S.S."/>
            <person name="Hitz B.C."/>
            <person name="Karra K."/>
            <person name="Nash R.S."/>
            <person name="Weng S."/>
            <person name="Wong E.D."/>
            <person name="Lloyd P."/>
            <person name="Skrzypek M.S."/>
            <person name="Miyasato S.R."/>
            <person name="Simison M."/>
            <person name="Cherry J.M."/>
        </authorList>
    </citation>
    <scope>GENOME REANNOTATION</scope>
    <source>
        <strain>ATCC 204508 / S288c</strain>
    </source>
</reference>
<reference key="4">
    <citation type="journal article" date="2007" name="Genome Res.">
        <title>Approaching a complete repository of sequence-verified protein-encoding clones for Saccharomyces cerevisiae.</title>
        <authorList>
            <person name="Hu Y."/>
            <person name="Rolfs A."/>
            <person name="Bhullar B."/>
            <person name="Murthy T.V.S."/>
            <person name="Zhu C."/>
            <person name="Berger M.F."/>
            <person name="Camargo A.A."/>
            <person name="Kelley F."/>
            <person name="McCarron S."/>
            <person name="Jepson D."/>
            <person name="Richardson A."/>
            <person name="Raphael J."/>
            <person name="Moreira D."/>
            <person name="Taycher E."/>
            <person name="Zuo D."/>
            <person name="Mohr S."/>
            <person name="Kane M.F."/>
            <person name="Williamson J."/>
            <person name="Simpson A.J.G."/>
            <person name="Bulyk M.L."/>
            <person name="Harlow E."/>
            <person name="Marsischky G."/>
            <person name="Kolodner R.D."/>
            <person name="LaBaer J."/>
        </authorList>
    </citation>
    <scope>NUCLEOTIDE SEQUENCE [GENOMIC DNA]</scope>
    <source>
        <strain>ATCC 204508 / S288c</strain>
    </source>
</reference>
<reference key="5">
    <citation type="journal article" date="2007" name="J. Proteome Res.">
        <title>Large-scale phosphorylation analysis of alpha-factor-arrested Saccharomyces cerevisiae.</title>
        <authorList>
            <person name="Li X."/>
            <person name="Gerber S.A."/>
            <person name="Rudner A.D."/>
            <person name="Beausoleil S.A."/>
            <person name="Haas W."/>
            <person name="Villen J."/>
            <person name="Elias J.E."/>
            <person name="Gygi S.P."/>
        </authorList>
    </citation>
    <scope>PHOSPHORYLATION [LARGE SCALE ANALYSIS] AT SER-288; THR-293 AND SER-296</scope>
    <scope>IDENTIFICATION BY MASS SPECTROMETRY [LARGE SCALE ANALYSIS]</scope>
    <source>
        <strain>ADR376</strain>
    </source>
</reference>
<sequence length="298" mass="33776">MVAISMIWFFTKRMPRIFALAFNLISIFLLIFLLIGCYNPSNQSTFLVKYKFDDNSPFYTIIEKSYEKSNTTLGLEEVIIRSGYMGVCIDNIPSQYSSYNNMTTFSNSICYARKNLSSVPLYRDLEIQLSNIASSSSKTQSSVVLNILKLAQLTSVNVIHPYVLMATVILTILMFLFILYVTVPKLPFKLAVNKFLLLLSSTIVLTWGIGAMWTHVGINASYRLVPSSSMNIITVKKGKKAAVMAWFSFAFLLLDSVVLWLIFLRDRKSLKDEIDNVPCAQNRYNNYSSDSSTLHSKV</sequence>
<protein>
    <recommendedName>
        <fullName>Factor-induced gene 1 protein</fullName>
    </recommendedName>
</protein>
<feature type="chain" id="PRO_0000087242" description="Factor-induced gene 1 protein">
    <location>
        <begin position="1"/>
        <end position="298"/>
    </location>
</feature>
<feature type="transmembrane region" description="Helical" evidence="1">
    <location>
        <begin position="17"/>
        <end position="37"/>
    </location>
</feature>
<feature type="transmembrane region" description="Helical" evidence="1">
    <location>
        <begin position="163"/>
        <end position="183"/>
    </location>
</feature>
<feature type="transmembrane region" description="Helical" evidence="1">
    <location>
        <begin position="195"/>
        <end position="215"/>
    </location>
</feature>
<feature type="transmembrane region" description="Helical" evidence="1">
    <location>
        <begin position="243"/>
        <end position="263"/>
    </location>
</feature>
<feature type="modified residue" description="Phosphoserine" evidence="4">
    <location>
        <position position="288"/>
    </location>
</feature>
<feature type="modified residue" description="Phosphothreonine" evidence="4">
    <location>
        <position position="293"/>
    </location>
</feature>
<feature type="modified residue" description="Phosphoserine" evidence="4">
    <location>
        <position position="296"/>
    </location>
</feature>
<feature type="sequence variant" description="In strain: CLIB 556 haplotype Ha1 and CLIB 630." evidence="2">
    <location>
        <begin position="1"/>
        <end position="5"/>
    </location>
</feature>
<feature type="sequence variant" description="In strain: CLIB 413 haplotype Ha1." evidence="2">
    <original>L</original>
    <variation>V</variation>
    <location>
        <position position="153"/>
    </location>
</feature>
<feature type="sequence variant" description="In strain: CLIB 630." evidence="2">
    <original>I</original>
    <variation>L</variation>
    <location>
        <position position="203"/>
    </location>
</feature>
<feature type="sequence variant" description="In strain: K1." evidence="2">
    <original>V</original>
    <variation>I</variation>
    <location>
        <position position="204"/>
    </location>
</feature>
<feature type="sequence variant" description="In strain: CLIB 413 haplotype Ha2." evidence="2">
    <original>A</original>
    <variation>E</variation>
    <location>
        <position position="220"/>
    </location>
</feature>
<feature type="sequence variant" description="In strain: CLIB 630." evidence="2">
    <original>R</original>
    <variation>I</variation>
    <location>
        <position position="223"/>
    </location>
</feature>
<feature type="sequence variant" description="In strain: CLIB 219." evidence="2">
    <original>K</original>
    <variation>N</variation>
    <location>
        <position position="236"/>
    </location>
</feature>
<feature type="sequence variant" description="In strain: CLIB 388 haplotype Ha2." evidence="2">
    <original>A</original>
    <variation>T</variation>
    <location>
        <position position="241"/>
    </location>
</feature>
<evidence type="ECO:0000255" key="1"/>
<evidence type="ECO:0000269" key="2">
    <source>
    </source>
</evidence>
<evidence type="ECO:0000305" key="3"/>
<evidence type="ECO:0007744" key="4">
    <source>
    </source>
</evidence>
<gene>
    <name type="primary">FIG1</name>
    <name type="ordered locus">YBR040W</name>
    <name type="ORF">YBR0410</name>
</gene>
<name>FIG1_YEAST</name>
<comment type="function">
    <text>Required for efficient mating.</text>
</comment>
<comment type="subcellular location">
    <subcellularLocation>
        <location evidence="3">Membrane</location>
        <topology evidence="3">Multi-pass membrane protein</topology>
    </subcellularLocation>
</comment>
<comment type="induction">
    <text>By mating pheromones.</text>
</comment>
<organism>
    <name type="scientific">Saccharomyces cerevisiae (strain ATCC 204508 / S288c)</name>
    <name type="common">Baker's yeast</name>
    <dbReference type="NCBI Taxonomy" id="559292"/>
    <lineage>
        <taxon>Eukaryota</taxon>
        <taxon>Fungi</taxon>
        <taxon>Dikarya</taxon>
        <taxon>Ascomycota</taxon>
        <taxon>Saccharomycotina</taxon>
        <taxon>Saccharomycetes</taxon>
        <taxon>Saccharomycetales</taxon>
        <taxon>Saccharomycetaceae</taxon>
        <taxon>Saccharomyces</taxon>
    </lineage>
</organism>
<proteinExistence type="evidence at protein level"/>